<gene>
    <name evidence="1" type="primary">atpE</name>
    <name type="ORF">PSC0546</name>
</gene>
<comment type="function">
    <text evidence="1">Produces ATP from ADP in the presence of a proton gradient across the membrane.</text>
</comment>
<comment type="subunit">
    <text evidence="1">F-type ATPases have 2 components, CF(1) - the catalytic core - and CF(0) - the membrane proton channel. CF(1) has five subunits: alpha(3), beta(3), gamma(1), delta(1), epsilon(1). CF(0) has three main subunits: a, b and c.</text>
</comment>
<comment type="subcellular location">
    <subcellularLocation>
        <location evidence="1">Plastid</location>
        <location evidence="1">Chloroplast thylakoid membrane</location>
        <topology evidence="1">Peripheral membrane protein</topology>
    </subcellularLocation>
</comment>
<comment type="similarity">
    <text evidence="1">Belongs to the ATPase epsilon chain family.</text>
</comment>
<organism>
    <name type="scientific">Panax ginseng</name>
    <name type="common">Korean ginseng</name>
    <dbReference type="NCBI Taxonomy" id="4054"/>
    <lineage>
        <taxon>Eukaryota</taxon>
        <taxon>Viridiplantae</taxon>
        <taxon>Streptophyta</taxon>
        <taxon>Embryophyta</taxon>
        <taxon>Tracheophyta</taxon>
        <taxon>Spermatophyta</taxon>
        <taxon>Magnoliopsida</taxon>
        <taxon>eudicotyledons</taxon>
        <taxon>Gunneridae</taxon>
        <taxon>Pentapetalae</taxon>
        <taxon>asterids</taxon>
        <taxon>campanulids</taxon>
        <taxon>Apiales</taxon>
        <taxon>Araliaceae</taxon>
        <taxon>Panax</taxon>
    </lineage>
</organism>
<proteinExistence type="inferred from homology"/>
<accession>Q68S00</accession>
<reference key="1">
    <citation type="journal article" date="2004" name="DNA Res.">
        <title>Complete chloroplast genome sequence from Korea ginseng (Panax schinseng Nees) and comparative analysis of sequence evolution among 17 vascular plants.</title>
        <authorList>
            <person name="Kim K.-J."/>
            <person name="Lee H.-L."/>
        </authorList>
    </citation>
    <scope>NUCLEOTIDE SEQUENCE [LARGE SCALE GENOMIC DNA]</scope>
</reference>
<evidence type="ECO:0000255" key="1">
    <source>
        <dbReference type="HAMAP-Rule" id="MF_00530"/>
    </source>
</evidence>
<geneLocation type="chloroplast"/>
<protein>
    <recommendedName>
        <fullName evidence="1">ATP synthase epsilon chain, chloroplastic</fullName>
    </recommendedName>
    <alternativeName>
        <fullName evidence="1">ATP synthase F1 sector epsilon subunit</fullName>
    </alternativeName>
    <alternativeName>
        <fullName evidence="1">F-ATPase epsilon subunit</fullName>
    </alternativeName>
</protein>
<sequence>MTLNLCVLTPNRTVWDSKVNEIILSTNNGQIGVLPDHASIATAVDIGILRIRLNDQWLTMALMGGFARIGNNEITVLVNDAEKSSDIDSQEAQQTLEIAEANLRKAEGKRQKIEANLALRRARTRVETINAISELVGVPE</sequence>
<feature type="chain" id="PRO_0000188282" description="ATP synthase epsilon chain, chloroplastic">
    <location>
        <begin position="1"/>
        <end position="140"/>
    </location>
</feature>
<dbReference type="EMBL" id="AY582139">
    <property type="protein sequence ID" value="AAT98515.1"/>
    <property type="molecule type" value="Genomic_DNA"/>
</dbReference>
<dbReference type="RefSeq" id="YP_086972.1">
    <property type="nucleotide sequence ID" value="NC_006290.1"/>
</dbReference>
<dbReference type="SMR" id="Q68S00"/>
<dbReference type="GeneID" id="3021522"/>
<dbReference type="GO" id="GO:0009535">
    <property type="term" value="C:chloroplast thylakoid membrane"/>
    <property type="evidence" value="ECO:0007669"/>
    <property type="project" value="UniProtKB-SubCell"/>
</dbReference>
<dbReference type="GO" id="GO:0045259">
    <property type="term" value="C:proton-transporting ATP synthase complex"/>
    <property type="evidence" value="ECO:0007669"/>
    <property type="project" value="UniProtKB-KW"/>
</dbReference>
<dbReference type="GO" id="GO:0005524">
    <property type="term" value="F:ATP binding"/>
    <property type="evidence" value="ECO:0007669"/>
    <property type="project" value="UniProtKB-UniRule"/>
</dbReference>
<dbReference type="GO" id="GO:0046933">
    <property type="term" value="F:proton-transporting ATP synthase activity, rotational mechanism"/>
    <property type="evidence" value="ECO:0007669"/>
    <property type="project" value="UniProtKB-UniRule"/>
</dbReference>
<dbReference type="CDD" id="cd12152">
    <property type="entry name" value="F1-ATPase_delta"/>
    <property type="match status" value="1"/>
</dbReference>
<dbReference type="FunFam" id="2.60.15.10:FF:000002">
    <property type="entry name" value="ATP synthase epsilon chain, chloroplastic"/>
    <property type="match status" value="1"/>
</dbReference>
<dbReference type="Gene3D" id="6.10.140.480">
    <property type="match status" value="1"/>
</dbReference>
<dbReference type="Gene3D" id="2.60.15.10">
    <property type="entry name" value="F0F1 ATP synthase delta/epsilon subunit, N-terminal"/>
    <property type="match status" value="1"/>
</dbReference>
<dbReference type="HAMAP" id="MF_00530">
    <property type="entry name" value="ATP_synth_epsil_bac"/>
    <property type="match status" value="1"/>
</dbReference>
<dbReference type="InterPro" id="IPR001469">
    <property type="entry name" value="ATP_synth_F1_dsu/esu"/>
</dbReference>
<dbReference type="InterPro" id="IPR020546">
    <property type="entry name" value="ATP_synth_F1_dsu/esu_N"/>
</dbReference>
<dbReference type="InterPro" id="IPR020547">
    <property type="entry name" value="ATP_synth_F1_esu_C"/>
</dbReference>
<dbReference type="InterPro" id="IPR036771">
    <property type="entry name" value="ATPsynth_dsu/esu_N"/>
</dbReference>
<dbReference type="NCBIfam" id="TIGR01216">
    <property type="entry name" value="ATP_synt_epsi"/>
    <property type="match status" value="1"/>
</dbReference>
<dbReference type="PANTHER" id="PTHR13822">
    <property type="entry name" value="ATP SYNTHASE DELTA/EPSILON CHAIN"/>
    <property type="match status" value="1"/>
</dbReference>
<dbReference type="PANTHER" id="PTHR13822:SF10">
    <property type="entry name" value="ATP SYNTHASE EPSILON CHAIN, CHLOROPLASTIC"/>
    <property type="match status" value="1"/>
</dbReference>
<dbReference type="Pfam" id="PF00401">
    <property type="entry name" value="ATP-synt_DE"/>
    <property type="match status" value="1"/>
</dbReference>
<dbReference type="Pfam" id="PF02823">
    <property type="entry name" value="ATP-synt_DE_N"/>
    <property type="match status" value="1"/>
</dbReference>
<dbReference type="SUPFAM" id="SSF51344">
    <property type="entry name" value="Epsilon subunit of F1F0-ATP synthase N-terminal domain"/>
    <property type="match status" value="1"/>
</dbReference>
<name>ATPE_PANGI</name>
<keyword id="KW-0066">ATP synthesis</keyword>
<keyword id="KW-0139">CF(1)</keyword>
<keyword id="KW-0150">Chloroplast</keyword>
<keyword id="KW-0375">Hydrogen ion transport</keyword>
<keyword id="KW-0406">Ion transport</keyword>
<keyword id="KW-0472">Membrane</keyword>
<keyword id="KW-0934">Plastid</keyword>
<keyword id="KW-0793">Thylakoid</keyword>
<keyword id="KW-0813">Transport</keyword>